<sequence>MSTEDEKLLKEAKKLPWEDRLGHKNWKVRNEANVDLASVFDSITDPKDPRLRDFGHLFRKTVADSNAPVQEKALDALIAFLRAADSDAGRYAKEVCDAIALKCLTGRKNTVDKAQAAFLLWVELEAVDVFLDTMEKAIKNKVAKAVVPAVDVMFQALSEFGSKVIPPKRILKMLPELFDHQDQNVRASAKGVTLELCRWIGKDPVKSILFEKMRDTMKKELEAELANVTAGAKPTRKIRSEQDKEPEAEASSDVVGDGPSEEAVADAPQEIDEYDLMDPVDILTPLEKSGFWDGVKATKWSERKEAVAELTKLASTKKIAPGDFSEICRTLKKLITDVNLAVAVEAIQAIGNLACGLRTHFSASSRFMLPVLLEKLKEKKQSVTDPLTQTLQTMYKAGCLNLVDVIEDVKTAVKNKVPLVRSSTLTWLTFCLETSNKALILKAHKEYVPLCMECLNDGTPDVRDAAFSALAAIAKSVGMRPLERSLEKLDDVRKKKLSEMIAGSGGGDQAGTSSVTVQSSVGSTATGNSDASFVRKSAASMLSGKRPAPSAQASKKVGTGKPGGGKKDGSVRNEGSKSVEPPEDVEPAEMGLEEIENRLGSLVKPETVSQLKSSVWKERLEATLALKEEIEGLQELDKSVEILVRLLCAVPGWNEKNVQVQQQVIEIITYISSTAAKFPKKCVVLCITGTSERVADIKTRASAMKCLTAFCEAVGPGFVFERLFKIMKEHKNPKVLSEGLLWMVSAVDDFGVSLLKLKDLIDFCKDVGLQSSTAATRNATIKLLGALHKFVGPDIKGFLNDVKPALLSALDTEYEKNPFEGTAAPKRVVKTSVSTSTSSGGLDSLPREDISTKITPNLLKGFESPDWKMRLESIEAVNKILEEANKRIQPTGTGELFGGLRGRLLDSNKNLVMQTLTTIGGVAAAMGPAVEKASKGILSDVLKCLGDNKKHMRECTLAALDLWLGAVHLDKMIPYIIIALTDGKMGAEGRKDLFDWLTKQLTGLSDFVDAIHLLKPASTAMTDKSADVRKAAEGCISEILRVSGQEMIEKNLKDIQGPALALVLEKVRPGFVQEPFESSKAMAGPVSKGVTKISKSTSNGTLKQGNRSRAVPTKGSSQITSVHDIAIQSQALLNTKDSNKEDRERVVVRRIKFEELRPEQIQDLENDMMKFFREDLQKRLLSPDFKKQVDGLEILQKALPSVSKEIIEVLDVLLRWFVLQFCKSNTTCLLKVLEFLPELFNTLRDEEYCMTEAEAAIFLPCLAEKLGHNIEKVREKMRELMKQIIQAYSVGKTYPYILEGLRSKNNRTRIECTDLIGYLLETCGTEIGGLLKYLNIVASLTAERDGELRKAALNTMATGYQILGADIWKYVGKLTDAQKSMIDDRFKWKAKDMEKRREGKPGEARAALRRSVRDSGPEVAEQSGDISQTVPGPLFPRQSYGISEQMLERTPVPRTIAGVNGPTDWNEALDIIMFGSPEQSVEGMKVVCHELAQASNDPEESAIDELVKDADGLVSCLANKVAKTFDVSLMGASSRSCKYVLNTLMQTFQNKKLAHAVKEGTLESLITELLLWLLDERVPRMEDGSQLLKALNVLMLKILDNADRTSSFVVLISLLRPLDPSRWPSPATAEVYAVRNQKFSDLVVKCLIKLTKLLQSTIYEVDLDRLLQSIHVYLQDLGMEEIRRRAGADDKPLRMVKTVLHELVKLRGAAIKGHLSLVPIDMRPQPIILAYIDLNLETLAAARMLTATGPVGQTHWTDSTANNPSPPANSADVQLKQELGAIFKKIGDKQTSTIGLYDLYHITKSYPKVDIFSQLQNASEAFRTYIRDGLAQVEKNAAAGRTPSSLPLSTPPPSSLALPSPDIPSLSSLDVKPLMNPRSDLYTDDIRASNMNPGVMTGTLDAIRERMKNMQLASSEPVSKPLMPTNDNLSMNQQSVPPSQMGQETVHTHPVVLPMDEKALSGLQARMERLKGGSLEHM</sequence>
<gene>
    <name type="primary">MOR1</name>
    <name type="synonym">GEM1</name>
    <name type="synonym">RID5</name>
    <name type="ordered locus">At2g35630</name>
    <name type="ORF">T20F21.17</name>
</gene>
<comment type="function">
    <text evidence="2 3 4 5 6 7 8 9 10">Microtubule-binding protein that is essential for cortical microtubules organization and function. Essential for maintaining the interphase cortical array and for correct morphogenesis. Promotes rapid growth and shrinkage of microtubules and suppresses the pausing of interphase microtubules. Regulates the structure and function of microtubule arrays during mitosis and cytokinesis. Probably not required for cellulose microfibrils alignment in roots.</text>
</comment>
<comment type="subcellular location">
    <subcellularLocation>
        <location evidence="8 10">Cytoplasm</location>
        <location evidence="8 10">Cytoskeleton</location>
    </subcellularLocation>
    <subcellularLocation>
        <location evidence="8">Cytoplasm</location>
        <location evidence="8">Cytoskeleton</location>
        <location evidence="8">Phragmoplast</location>
    </subcellularLocation>
    <subcellularLocation>
        <location evidence="8">Cytoplasm</location>
        <location evidence="8">Cytoskeleton</location>
        <location evidence="8">Spindle</location>
    </subcellularLocation>
    <text evidence="8">Associated with microtubules in interphase arrays, preprophase bands, spindles, and phragmoplasts.</text>
</comment>
<comment type="tissue specificity">
    <text evidence="2">Expressed in roots, cotyledons, rosette leaves, stems, open flowers and green siliques.</text>
</comment>
<comment type="disruption phenotype">
    <text evidence="2 3 5">Homozygous lethal in gem1-1 mutant. No visible phenotype under normal growth condition in mor1-1 and mor1-2 mutants, but the restrictive temperature of 29 degrees Celsius causes cortical microtubule shortening and disorganization, left-handed helical growth of root, disrupts microtubule arrays during mitosis and cytokinesis and alters plant morphology and organ development.</text>
</comment>
<comment type="miscellaneous">
    <text>Aberrant cytokinesis and cell division pattern during pollen mitosis in heterozygous gem1-1 and gem1-2 mutants.</text>
</comment>
<comment type="similarity">
    <text evidence="11">Belongs to the TOG/XMAP215 family.</text>
</comment>
<comment type="sequence caution" evidence="11">
    <conflict type="erroneous gene model prediction">
        <sequence resource="EMBL-CDS" id="AAD15450"/>
    </conflict>
</comment>
<comment type="sequence caution" evidence="11">
    <conflict type="erroneous initiation">
        <sequence resource="EMBL-CDS" id="BAD93861"/>
    </conflict>
    <text>Truncated N-terminus.</text>
</comment>
<proteinExistence type="evidence at protein level"/>
<feature type="chain" id="PRO_0000409455" description="Protein MOR1">
    <location>
        <begin position="1"/>
        <end position="1978"/>
    </location>
</feature>
<feature type="repeat" description="HEAT 1">
    <location>
        <begin position="48"/>
        <end position="86"/>
    </location>
</feature>
<feature type="repeat" description="HEAT 2">
    <location>
        <begin position="165"/>
        <end position="202"/>
    </location>
</feature>
<feature type="repeat" description="HEAT 3">
    <location>
        <begin position="322"/>
        <end position="359"/>
    </location>
</feature>
<feature type="repeat" description="HEAT 4">
    <location>
        <begin position="363"/>
        <end position="400"/>
    </location>
</feature>
<feature type="repeat" description="HEAT 5">
    <location>
        <begin position="442"/>
        <end position="479"/>
    </location>
</feature>
<feature type="repeat" description="HEAT 6">
    <location>
        <begin position="849"/>
        <end position="886"/>
    </location>
</feature>
<feature type="repeat" description="HEAT 7">
    <location>
        <begin position="890"/>
        <end position="928"/>
    </location>
</feature>
<feature type="repeat" description="HEAT 8">
    <location>
        <begin position="932"/>
        <end position="969"/>
    </location>
</feature>
<feature type="repeat" description="HEAT 9">
    <location>
        <begin position="1008"/>
        <end position="1045"/>
    </location>
</feature>
<feature type="repeat" description="HEAT 10">
    <location>
        <begin position="1230"/>
        <end position="1253"/>
    </location>
</feature>
<feature type="repeat" description="HEAT 11">
    <location>
        <begin position="1254"/>
        <end position="1286"/>
    </location>
</feature>
<feature type="repeat" description="HEAT 12">
    <location>
        <begin position="1287"/>
        <end position="1325"/>
    </location>
</feature>
<feature type="repeat" description="HEAT 13">
    <location>
        <begin position="1328"/>
        <end position="1365"/>
    </location>
</feature>
<feature type="repeat" description="HEAT 14">
    <location>
        <begin position="1535"/>
        <end position="1575"/>
    </location>
</feature>
<feature type="region of interest" description="Disordered" evidence="1">
    <location>
        <begin position="230"/>
        <end position="264"/>
    </location>
</feature>
<feature type="region of interest" description="Disordered" evidence="1">
    <location>
        <begin position="501"/>
        <end position="587"/>
    </location>
</feature>
<feature type="region of interest" description="Disordered" evidence="1">
    <location>
        <begin position="1087"/>
        <end position="1115"/>
    </location>
</feature>
<feature type="region of interest" description="Disordered" evidence="1">
    <location>
        <begin position="1393"/>
        <end position="1431"/>
    </location>
</feature>
<feature type="region of interest" description="Disordered" evidence="1">
    <location>
        <begin position="1837"/>
        <end position="1862"/>
    </location>
</feature>
<feature type="compositionally biased region" description="Basic and acidic residues" evidence="1">
    <location>
        <begin position="238"/>
        <end position="247"/>
    </location>
</feature>
<feature type="compositionally biased region" description="Low complexity" evidence="1">
    <location>
        <begin position="510"/>
        <end position="527"/>
    </location>
</feature>
<feature type="compositionally biased region" description="Basic and acidic residues" evidence="1">
    <location>
        <begin position="565"/>
        <end position="577"/>
    </location>
</feature>
<feature type="compositionally biased region" description="Polar residues" evidence="1">
    <location>
        <begin position="1093"/>
        <end position="1107"/>
    </location>
</feature>
<feature type="compositionally biased region" description="Basic and acidic residues" evidence="1">
    <location>
        <begin position="1393"/>
        <end position="1403"/>
    </location>
</feature>
<feature type="mutagenesis site" description="In rid5; no formation of root primordia at temperatures above 28 degrees Celsius." evidence="5">
    <original>C</original>
    <variation>Y</variation>
    <location>
        <position position="96"/>
    </location>
</feature>
<feature type="mutagenesis site" description="In mor1-1; short and disordered microtubules at temperatures above 28 degrees Celsius." evidence="2">
    <original>L</original>
    <variation>F</variation>
    <location>
        <position position="174"/>
    </location>
</feature>
<feature type="mutagenesis site" description="In mor1-2; short and disordered microtubules at temperatures above 28 degrees Celsius." evidence="2">
    <original>E</original>
    <variation>K</variation>
    <location>
        <position position="195"/>
    </location>
</feature>
<organism>
    <name type="scientific">Arabidopsis thaliana</name>
    <name type="common">Mouse-ear cress</name>
    <dbReference type="NCBI Taxonomy" id="3702"/>
    <lineage>
        <taxon>Eukaryota</taxon>
        <taxon>Viridiplantae</taxon>
        <taxon>Streptophyta</taxon>
        <taxon>Embryophyta</taxon>
        <taxon>Tracheophyta</taxon>
        <taxon>Spermatophyta</taxon>
        <taxon>Magnoliopsida</taxon>
        <taxon>eudicotyledons</taxon>
        <taxon>Gunneridae</taxon>
        <taxon>Pentapetalae</taxon>
        <taxon>rosids</taxon>
        <taxon>malvids</taxon>
        <taxon>Brassicales</taxon>
        <taxon>Brassicaceae</taxon>
        <taxon>Camelineae</taxon>
        <taxon>Arabidopsis</taxon>
    </lineage>
</organism>
<protein>
    <recommendedName>
        <fullName>Protein MOR1</fullName>
    </recommendedName>
    <alternativeName>
        <fullName>Protein GEM1</fullName>
    </alternativeName>
    <alternativeName>
        <fullName>Protein GEMINI POLLEN 1</fullName>
    </alternativeName>
    <alternativeName>
        <fullName>Protein MICROTUBULE ORGANIZATION 1</fullName>
    </alternativeName>
    <alternativeName>
        <fullName>Protein RID5</fullName>
    </alternativeName>
    <alternativeName>
        <fullName>Protein ROOT INITIATION DEFECTIVE 5</fullName>
    </alternativeName>
</protein>
<keyword id="KW-0131">Cell cycle</keyword>
<keyword id="KW-0132">Cell division</keyword>
<keyword id="KW-0963">Cytoplasm</keyword>
<keyword id="KW-0206">Cytoskeleton</keyword>
<keyword id="KW-0493">Microtubule</keyword>
<keyword id="KW-0498">Mitosis</keyword>
<keyword id="KW-1185">Reference proteome</keyword>
<keyword id="KW-0677">Repeat</keyword>
<evidence type="ECO:0000256" key="1">
    <source>
        <dbReference type="SAM" id="MobiDB-lite"/>
    </source>
</evidence>
<evidence type="ECO:0000269" key="2">
    <source>
    </source>
</evidence>
<evidence type="ECO:0000269" key="3">
    <source>
    </source>
</evidence>
<evidence type="ECO:0000269" key="4">
    <source>
    </source>
</evidence>
<evidence type="ECO:0000269" key="5">
    <source>
    </source>
</evidence>
<evidence type="ECO:0000269" key="6">
    <source>
    </source>
</evidence>
<evidence type="ECO:0000269" key="7">
    <source>
    </source>
</evidence>
<evidence type="ECO:0000269" key="8">
    <source>
    </source>
</evidence>
<evidence type="ECO:0000269" key="9">
    <source>
    </source>
</evidence>
<evidence type="ECO:0000269" key="10">
    <source>
    </source>
</evidence>
<evidence type="ECO:0000305" key="11"/>
<accession>Q94FN2</accession>
<accession>Q56XA7</accession>
<accession>Q9ZQN6</accession>
<dbReference type="EMBL" id="AF367246">
    <property type="protein sequence ID" value="AAK59871.1"/>
    <property type="molecule type" value="mRNA"/>
</dbReference>
<dbReference type="EMBL" id="AY124770">
    <property type="protein sequence ID" value="AAM94170.1"/>
    <property type="molecule type" value="Genomic_DNA"/>
</dbReference>
<dbReference type="EMBL" id="AC006068">
    <property type="protein sequence ID" value="AAD15450.2"/>
    <property type="status" value="ALT_SEQ"/>
    <property type="molecule type" value="Genomic_DNA"/>
</dbReference>
<dbReference type="EMBL" id="CP002685">
    <property type="protein sequence ID" value="AEC09133.1"/>
    <property type="molecule type" value="Genomic_DNA"/>
</dbReference>
<dbReference type="EMBL" id="AK221769">
    <property type="protein sequence ID" value="BAD93861.1"/>
    <property type="status" value="ALT_INIT"/>
    <property type="molecule type" value="mRNA"/>
</dbReference>
<dbReference type="PIR" id="A84771">
    <property type="entry name" value="A84771"/>
</dbReference>
<dbReference type="RefSeq" id="NP_565811.2">
    <property type="nucleotide sequence ID" value="NM_129117.5"/>
</dbReference>
<dbReference type="BioGRID" id="3476">
    <property type="interactions" value="2"/>
</dbReference>
<dbReference type="FunCoup" id="Q94FN2">
    <property type="interactions" value="4007"/>
</dbReference>
<dbReference type="STRING" id="3702.Q94FN2"/>
<dbReference type="BindingDB" id="Q94FN2"/>
<dbReference type="iPTMnet" id="Q94FN2"/>
<dbReference type="PaxDb" id="3702-AT2G35630.1"/>
<dbReference type="ProteomicsDB" id="238264"/>
<dbReference type="EnsemblPlants" id="AT2G35630.1">
    <property type="protein sequence ID" value="AT2G35630.1"/>
    <property type="gene ID" value="AT2G35630"/>
</dbReference>
<dbReference type="GeneID" id="818131"/>
<dbReference type="Gramene" id="AT2G35630.1">
    <property type="protein sequence ID" value="AT2G35630.1"/>
    <property type="gene ID" value="AT2G35630"/>
</dbReference>
<dbReference type="KEGG" id="ath:AT2G35630"/>
<dbReference type="Araport" id="AT2G35630"/>
<dbReference type="TAIR" id="AT2G35630">
    <property type="gene designation" value="MOR1"/>
</dbReference>
<dbReference type="eggNOG" id="KOG1820">
    <property type="taxonomic scope" value="Eukaryota"/>
</dbReference>
<dbReference type="HOGENOM" id="CLU_000539_1_0_1"/>
<dbReference type="InParanoid" id="Q94FN2"/>
<dbReference type="OMA" id="NWKERKE"/>
<dbReference type="OrthoDB" id="205662at2759"/>
<dbReference type="PhylomeDB" id="Q94FN2"/>
<dbReference type="CD-CODE" id="33FCD62D">
    <property type="entry name" value="Centrosome"/>
</dbReference>
<dbReference type="CD-CODE" id="4299E36E">
    <property type="entry name" value="Nucleolus"/>
</dbReference>
<dbReference type="PRO" id="PR:Q94FN2"/>
<dbReference type="Proteomes" id="UP000006548">
    <property type="component" value="Chromosome 2"/>
</dbReference>
<dbReference type="ExpressionAtlas" id="Q94FN2">
    <property type="expression patterns" value="baseline and differential"/>
</dbReference>
<dbReference type="GO" id="GO:0030981">
    <property type="term" value="C:cortical microtubule cytoskeleton"/>
    <property type="evidence" value="ECO:0000314"/>
    <property type="project" value="TAIR"/>
</dbReference>
<dbReference type="GO" id="GO:0005874">
    <property type="term" value="C:microtubule"/>
    <property type="evidence" value="ECO:0000314"/>
    <property type="project" value="TAIR"/>
</dbReference>
<dbReference type="GO" id="GO:0009524">
    <property type="term" value="C:phragmoplast"/>
    <property type="evidence" value="ECO:0000314"/>
    <property type="project" value="TAIR"/>
</dbReference>
<dbReference type="GO" id="GO:0009506">
    <property type="term" value="C:plasmodesma"/>
    <property type="evidence" value="ECO:0007005"/>
    <property type="project" value="TAIR"/>
</dbReference>
<dbReference type="GO" id="GO:0009574">
    <property type="term" value="C:preprophase band"/>
    <property type="evidence" value="ECO:0000314"/>
    <property type="project" value="TAIR"/>
</dbReference>
<dbReference type="GO" id="GO:0005819">
    <property type="term" value="C:spindle"/>
    <property type="evidence" value="ECO:0000314"/>
    <property type="project" value="TAIR"/>
</dbReference>
<dbReference type="GO" id="GO:0008017">
    <property type="term" value="F:microtubule binding"/>
    <property type="evidence" value="ECO:0000314"/>
    <property type="project" value="TAIR"/>
</dbReference>
<dbReference type="GO" id="GO:0061863">
    <property type="term" value="F:microtubule plus end polymerase"/>
    <property type="evidence" value="ECO:0007669"/>
    <property type="project" value="InterPro"/>
</dbReference>
<dbReference type="GO" id="GO:0051010">
    <property type="term" value="F:microtubule plus-end binding"/>
    <property type="evidence" value="ECO:0007669"/>
    <property type="project" value="InterPro"/>
</dbReference>
<dbReference type="GO" id="GO:0009920">
    <property type="term" value="P:cell plate formation involved in plant-type cell wall biogenesis"/>
    <property type="evidence" value="ECO:0000315"/>
    <property type="project" value="TAIR"/>
</dbReference>
<dbReference type="GO" id="GO:0000911">
    <property type="term" value="P:cytokinesis by cell plate formation"/>
    <property type="evidence" value="ECO:0000315"/>
    <property type="project" value="TAIR"/>
</dbReference>
<dbReference type="GO" id="GO:0030951">
    <property type="term" value="P:establishment or maintenance of microtubule cytoskeleton polarity"/>
    <property type="evidence" value="ECO:0007669"/>
    <property type="project" value="InterPro"/>
</dbReference>
<dbReference type="GO" id="GO:0000226">
    <property type="term" value="P:microtubule cytoskeleton organization"/>
    <property type="evidence" value="ECO:0000315"/>
    <property type="project" value="TAIR"/>
</dbReference>
<dbReference type="GO" id="GO:0046785">
    <property type="term" value="P:microtubule polymerization"/>
    <property type="evidence" value="ECO:0007669"/>
    <property type="project" value="InterPro"/>
</dbReference>
<dbReference type="GO" id="GO:0007051">
    <property type="term" value="P:spindle organization"/>
    <property type="evidence" value="ECO:0007669"/>
    <property type="project" value="InterPro"/>
</dbReference>
<dbReference type="FunFam" id="1.25.10.10:FF:000019">
    <property type="entry name" value="Cytoskeleton-associated protein 5"/>
    <property type="match status" value="1"/>
</dbReference>
<dbReference type="FunFam" id="1.25.10.10:FF:000121">
    <property type="entry name" value="Protein MOR1"/>
    <property type="match status" value="1"/>
</dbReference>
<dbReference type="FunFam" id="1.25.10.10:FF:000137">
    <property type="entry name" value="Protein MOR1"/>
    <property type="match status" value="1"/>
</dbReference>
<dbReference type="FunFam" id="1.25.10.10:FF:000155">
    <property type="entry name" value="Protein MOR1"/>
    <property type="match status" value="1"/>
</dbReference>
<dbReference type="FunFam" id="1.25.10.10:FF:000165">
    <property type="entry name" value="Protein MOR1"/>
    <property type="match status" value="1"/>
</dbReference>
<dbReference type="Gene3D" id="1.25.10.10">
    <property type="entry name" value="Leucine-rich Repeat Variant"/>
    <property type="match status" value="5"/>
</dbReference>
<dbReference type="InterPro" id="IPR011989">
    <property type="entry name" value="ARM-like"/>
</dbReference>
<dbReference type="InterPro" id="IPR016024">
    <property type="entry name" value="ARM-type_fold"/>
</dbReference>
<dbReference type="InterPro" id="IPR024395">
    <property type="entry name" value="CLASP_N_dom"/>
</dbReference>
<dbReference type="InterPro" id="IPR021133">
    <property type="entry name" value="HEAT_type_2"/>
</dbReference>
<dbReference type="InterPro" id="IPR034085">
    <property type="entry name" value="TOG"/>
</dbReference>
<dbReference type="InterPro" id="IPR045110">
    <property type="entry name" value="XMAP215"/>
</dbReference>
<dbReference type="InterPro" id="IPR048491">
    <property type="entry name" value="XMAP215_CLASP_TOG"/>
</dbReference>
<dbReference type="PANTHER" id="PTHR12609">
    <property type="entry name" value="MICROTUBULE ASSOCIATED PROTEIN XMAP215"/>
    <property type="match status" value="1"/>
</dbReference>
<dbReference type="Pfam" id="PF12348">
    <property type="entry name" value="CLASP_N"/>
    <property type="match status" value="1"/>
</dbReference>
<dbReference type="Pfam" id="PF21041">
    <property type="entry name" value="XMAP215_CLASP_TOG"/>
    <property type="match status" value="2"/>
</dbReference>
<dbReference type="SMART" id="SM01349">
    <property type="entry name" value="TOG"/>
    <property type="match status" value="5"/>
</dbReference>
<dbReference type="SUPFAM" id="SSF48371">
    <property type="entry name" value="ARM repeat"/>
    <property type="match status" value="2"/>
</dbReference>
<dbReference type="PROSITE" id="PS50077">
    <property type="entry name" value="HEAT_REPEAT"/>
    <property type="match status" value="1"/>
</dbReference>
<name>MOR1_ARATH</name>
<reference key="1">
    <citation type="journal article" date="2001" name="Nature">
        <title>MOR1 is essential for organizing cortical microtubules in plants.</title>
        <authorList>
            <person name="Whittington A.T."/>
            <person name="Vugrek O."/>
            <person name="Wei K.J."/>
            <person name="Hasenbein N.G."/>
            <person name="Sugimoto K."/>
            <person name="Rashbrooke M.C."/>
            <person name="Wasteneys G.O."/>
        </authorList>
    </citation>
    <scope>NUCLEOTIDE SEQUENCE [MRNA]</scope>
    <scope>FUNCTION</scope>
    <scope>TISSUE SPECIFICITY</scope>
    <scope>DISRUPTION PHENOTYPE</scope>
    <scope>MUTAGENESIS OF LEU-174 AND GLU-195</scope>
    <source>
        <strain>cv. Columbia</strain>
    </source>
</reference>
<reference key="2">
    <citation type="journal article" date="2002" name="Nat. Cell Biol.">
        <title>MOR1/GEM1 has an essential role in the plant-specific cytokinetic phragmoplast.</title>
        <authorList>
            <person name="Twell D."/>
            <person name="Park S.K."/>
            <person name="Hawkins T.J."/>
            <person name="Schubert D."/>
            <person name="Schmidt R."/>
            <person name="Smertenko A."/>
            <person name="Hussey P.J."/>
        </authorList>
    </citation>
    <scope>NUCLEOTIDE SEQUENCE [GENOMIC DNA]</scope>
    <scope>FUNCTION</scope>
    <scope>SUBCELLULAR LOCATION</scope>
    <scope>DISRUPTION PHENOTYPE</scope>
    <source>
        <strain>cv. No-0</strain>
    </source>
</reference>
<reference key="3">
    <citation type="journal article" date="1999" name="Nature">
        <title>Sequence and analysis of chromosome 2 of the plant Arabidopsis thaliana.</title>
        <authorList>
            <person name="Lin X."/>
            <person name="Kaul S."/>
            <person name="Rounsley S.D."/>
            <person name="Shea T.P."/>
            <person name="Benito M.-I."/>
            <person name="Town C.D."/>
            <person name="Fujii C.Y."/>
            <person name="Mason T.M."/>
            <person name="Bowman C.L."/>
            <person name="Barnstead M.E."/>
            <person name="Feldblyum T.V."/>
            <person name="Buell C.R."/>
            <person name="Ketchum K.A."/>
            <person name="Lee J.J."/>
            <person name="Ronning C.M."/>
            <person name="Koo H.L."/>
            <person name="Moffat K.S."/>
            <person name="Cronin L.A."/>
            <person name="Shen M."/>
            <person name="Pai G."/>
            <person name="Van Aken S."/>
            <person name="Umayam L."/>
            <person name="Tallon L.J."/>
            <person name="Gill J.E."/>
            <person name="Adams M.D."/>
            <person name="Carrera A.J."/>
            <person name="Creasy T.H."/>
            <person name="Goodman H.M."/>
            <person name="Somerville C.R."/>
            <person name="Copenhaver G.P."/>
            <person name="Preuss D."/>
            <person name="Nierman W.C."/>
            <person name="White O."/>
            <person name="Eisen J.A."/>
            <person name="Salzberg S.L."/>
            <person name="Fraser C.M."/>
            <person name="Venter J.C."/>
        </authorList>
    </citation>
    <scope>NUCLEOTIDE SEQUENCE [LARGE SCALE GENOMIC DNA]</scope>
    <source>
        <strain>cv. Columbia</strain>
    </source>
</reference>
<reference key="4">
    <citation type="journal article" date="2017" name="Plant J.">
        <title>Araport11: a complete reannotation of the Arabidopsis thaliana reference genome.</title>
        <authorList>
            <person name="Cheng C.Y."/>
            <person name="Krishnakumar V."/>
            <person name="Chan A.P."/>
            <person name="Thibaud-Nissen F."/>
            <person name="Schobel S."/>
            <person name="Town C.D."/>
        </authorList>
    </citation>
    <scope>GENOME REANNOTATION</scope>
    <source>
        <strain>cv. Columbia</strain>
    </source>
</reference>
<reference key="5">
    <citation type="submission" date="2005-03" db="EMBL/GenBank/DDBJ databases">
        <title>Large-scale analysis of RIKEN Arabidopsis full-length (RAFL) cDNAs.</title>
        <authorList>
            <person name="Totoki Y."/>
            <person name="Seki M."/>
            <person name="Ishida J."/>
            <person name="Nakajima M."/>
            <person name="Enju A."/>
            <person name="Kamiya A."/>
            <person name="Narusaka M."/>
            <person name="Shin-i T."/>
            <person name="Nakagawa M."/>
            <person name="Sakamoto N."/>
            <person name="Oishi K."/>
            <person name="Kohara Y."/>
            <person name="Kobayashi M."/>
            <person name="Toyoda A."/>
            <person name="Sakaki Y."/>
            <person name="Sakurai T."/>
            <person name="Iida K."/>
            <person name="Akiyama K."/>
            <person name="Satou M."/>
            <person name="Toyoda T."/>
            <person name="Konagaya A."/>
            <person name="Carninci P."/>
            <person name="Kawai J."/>
            <person name="Hayashizaki Y."/>
            <person name="Shinozaki K."/>
        </authorList>
    </citation>
    <scope>NUCLEOTIDE SEQUENCE [LARGE SCALE MRNA] OF 1537-1978</scope>
    <source>
        <strain>cv. Columbia</strain>
    </source>
</reference>
<reference key="6">
    <citation type="journal article" date="2003" name="Plant Cell">
        <title>Mutation or drug-dependent microtubule disruption causes radial swelling without altering parallel cellulose microfibril deposition in Arabidopsis root cells.</title>
        <authorList>
            <person name="Sugimoto K."/>
            <person name="Himmelspach R."/>
            <person name="Williamson R.E."/>
            <person name="Wasteneys G.O."/>
        </authorList>
    </citation>
    <scope>FUNCTION</scope>
</reference>
<reference key="7">
    <citation type="journal article" date="2003" name="Development">
        <title>Genetic analysis of adventitious root formation with a novel series of temperature-sensitive mutants of Arabidopsis thaliana.</title>
        <authorList>
            <person name="Konishi M."/>
            <person name="Sugiyama M."/>
        </authorList>
    </citation>
    <scope>FUNCTION</scope>
    <scope>DISRUPTION PHENOTYPE</scope>
    <scope>MUTAGENESIS OF CYS-96</scope>
</reference>
<reference key="8">
    <citation type="journal article" date="2003" name="Plant J.">
        <title>Cellulose microfibril alignment recovers from DCB-induced disruption despite microtubule disorganization.</title>
        <authorList>
            <person name="Himmelspach R."/>
            <person name="Williamson R.E."/>
            <person name="Wasteneys G.O."/>
        </authorList>
    </citation>
    <scope>FUNCTION</scope>
</reference>
<reference key="9">
    <citation type="journal article" date="2005" name="Plant Cell Physiol.">
        <title>Aberrant cell plate formation in the Arabidopsis thaliana microtubule organization 1 mutant.</title>
        <authorList>
            <person name="Eleftheriou E.P."/>
            <person name="Baskin T.I."/>
            <person name="Hepler P.K."/>
        </authorList>
    </citation>
    <scope>FUNCTION</scope>
</reference>
<reference key="10">
    <citation type="journal article" date="2005" name="Plant J.">
        <title>Identification of a novel family of 70 kDa microtubule-associated proteins in Arabidopsis cells.</title>
        <authorList>
            <person name="Korolev A.V."/>
            <person name="Chan J."/>
            <person name="Naldrett M.J."/>
            <person name="Doonan J.H."/>
            <person name="Lloyd C.W."/>
        </authorList>
    </citation>
    <scope>IDENTIFICATION BY MASS SPECTROMETRY</scope>
</reference>
<reference key="11">
    <citation type="journal article" date="2006" name="New Phytol.">
        <title>Hypersensitivity to cytoskeletal antagonists demonstrates microtubule-microfilament cross-talk in the control of root elongation in Arabidopsis thaliana.</title>
        <authorList>
            <person name="Collings D.A."/>
            <person name="Lill A.W."/>
            <person name="Himmelspach R."/>
            <person name="Wasteneys G.O."/>
        </authorList>
    </citation>
    <scope>FUNCTION</scope>
</reference>
<reference key="12">
    <citation type="journal article" date="2006" name="Plant Physiol.">
        <title>MICROTUBULE ORGANIZATION 1 regulates structure and function of microtubule arrays during mitosis and cytokinesis in the Arabidopsis root.</title>
        <authorList>
            <person name="Kawamura E."/>
            <person name="Himmelspach R."/>
            <person name="Rashbrooke M.C."/>
            <person name="Whittington A.T."/>
            <person name="Gale K.R."/>
            <person name="Collings D.A."/>
            <person name="Wasteneys G.O."/>
        </authorList>
    </citation>
    <scope>FUNCTION</scope>
    <scope>SUBCELLULAR LOCATION</scope>
</reference>
<reference key="13">
    <citation type="journal article" date="2008" name="J. Cell Sci.">
        <title>MOR1, the Arabidopsis thaliana homologue of Xenopus MAP215, promotes rapid growth and shrinkage, and suppresses the pausing of microtubules in vivo.</title>
        <authorList>
            <person name="Kawamura E."/>
            <person name="Wasteneys G.O."/>
        </authorList>
    </citation>
    <scope>FUNCTION</scope>
    <scope>SUBCELLULAR LOCATION</scope>
</reference>
<reference key="14">
    <citation type="journal article" date="2009" name="Plant Physiol.">
        <title>Large-scale Arabidopsis phosphoproteome profiling reveals novel chloroplast kinase substrates and phosphorylation networks.</title>
        <authorList>
            <person name="Reiland S."/>
            <person name="Messerli G."/>
            <person name="Baerenfaller K."/>
            <person name="Gerrits B."/>
            <person name="Endler A."/>
            <person name="Grossmann J."/>
            <person name="Gruissem W."/>
            <person name="Baginsky S."/>
        </authorList>
    </citation>
    <scope>IDENTIFICATION BY MASS SPECTROMETRY [LARGE SCALE ANALYSIS]</scope>
</reference>